<feature type="signal peptide" evidence="2">
    <location>
        <begin position="1"/>
        <end position="19"/>
    </location>
</feature>
<feature type="chain" id="PRO_0000031898" description="Metal ABC transporter substrate-binding lipoprotein SsaB">
    <location>
        <begin position="20"/>
        <end position="309"/>
    </location>
</feature>
<feature type="binding site" evidence="1">
    <location>
        <position position="67"/>
    </location>
    <ligand>
        <name>a divalent metal cation</name>
        <dbReference type="ChEBI" id="CHEBI:60240"/>
    </ligand>
</feature>
<feature type="binding site" evidence="1">
    <location>
        <position position="139"/>
    </location>
    <ligand>
        <name>a divalent metal cation</name>
        <dbReference type="ChEBI" id="CHEBI:60240"/>
    </ligand>
</feature>
<feature type="binding site" evidence="1">
    <location>
        <position position="205"/>
    </location>
    <ligand>
        <name>a divalent metal cation</name>
        <dbReference type="ChEBI" id="CHEBI:60240"/>
    </ligand>
</feature>
<feature type="binding site" evidence="1">
    <location>
        <position position="280"/>
    </location>
    <ligand>
        <name>a divalent metal cation</name>
        <dbReference type="ChEBI" id="CHEBI:60240"/>
    </ligand>
</feature>
<feature type="lipid moiety-binding region" description="N-palmitoyl cysteine" evidence="2 3">
    <location>
        <position position="20"/>
    </location>
</feature>
<feature type="lipid moiety-binding region" description="S-diacylglycerol cysteine" evidence="2 3">
    <location>
        <position position="20"/>
    </location>
</feature>
<feature type="mutagenesis site" description="No loss of acylation." evidence="3">
    <original>C</original>
    <variation>G</variation>
    <location>
        <position position="15"/>
    </location>
</feature>
<feature type="mutagenesis site" description="Loss of acylation." evidence="3">
    <original>C</original>
    <variation>G</variation>
    <location>
        <position position="20"/>
    </location>
</feature>
<keyword id="KW-1003">Cell membrane</keyword>
<keyword id="KW-0903">Direct protein sequencing</keyword>
<keyword id="KW-0449">Lipoprotein</keyword>
<keyword id="KW-0464">Manganese</keyword>
<keyword id="KW-0472">Membrane</keyword>
<keyword id="KW-0479">Metal-binding</keyword>
<keyword id="KW-0564">Palmitate</keyword>
<keyword id="KW-0732">Signal</keyword>
<keyword id="KW-0813">Transport</keyword>
<proteinExistence type="evidence at protein level"/>
<accession>P31304</accession>
<reference key="1">
    <citation type="journal article" date="1991" name="Infect. Immun.">
        <title>Nucleotide sequence of a gene coding for a saliva-binding protein (SsaB) from Streptococcus sanguis 12 and possible role of the protein in coaggregation with actinomyces.</title>
        <authorList>
            <person name="Ganeshkumar N."/>
            <person name="Hannam P.M."/>
            <person name="Kolenbrander P.E."/>
            <person name="McBride B.C."/>
        </authorList>
    </citation>
    <scope>NUCLEOTIDE SEQUENCE [GENOMIC DNA]</scope>
    <scope>PROTEIN SEQUENCE OF 25-53</scope>
    <source>
        <strain>12</strain>
    </source>
</reference>
<reference key="2">
    <citation type="journal article" date="1993" name="J. Bacteriol.">
        <title>Saliva-binding protein (SsaB) from Streptococcus sanguis 12 is a lipoprotein.</title>
        <authorList>
            <person name="Ganeshkumar N."/>
            <person name="Arora N."/>
            <person name="Kolenbrander P.E."/>
        </authorList>
    </citation>
    <scope>SUBCELLULAR LOCATION</scope>
    <scope>DIACYLGLYCEROL AT CYS-20</scope>
    <scope>PALMITOYLATION AT CYS-20</scope>
    <scope>MUTAGENESIS OF CYS-15 AND CYS-20</scope>
</reference>
<dbReference type="EMBL" id="M63481">
    <property type="protein sequence ID" value="AAC98426.1"/>
    <property type="molecule type" value="Genomic_DNA"/>
</dbReference>
<dbReference type="PIR" id="A43583">
    <property type="entry name" value="A43583"/>
</dbReference>
<dbReference type="SMR" id="P31304"/>
<dbReference type="GO" id="GO:0005886">
    <property type="term" value="C:plasma membrane"/>
    <property type="evidence" value="ECO:0007669"/>
    <property type="project" value="UniProtKB-SubCell"/>
</dbReference>
<dbReference type="GO" id="GO:0046872">
    <property type="term" value="F:metal ion binding"/>
    <property type="evidence" value="ECO:0007669"/>
    <property type="project" value="UniProtKB-KW"/>
</dbReference>
<dbReference type="GO" id="GO:0007155">
    <property type="term" value="P:cell adhesion"/>
    <property type="evidence" value="ECO:0007669"/>
    <property type="project" value="InterPro"/>
</dbReference>
<dbReference type="GO" id="GO:0030001">
    <property type="term" value="P:metal ion transport"/>
    <property type="evidence" value="ECO:0007669"/>
    <property type="project" value="InterPro"/>
</dbReference>
<dbReference type="CDD" id="cd01137">
    <property type="entry name" value="PsaA"/>
    <property type="match status" value="1"/>
</dbReference>
<dbReference type="Gene3D" id="3.40.50.1980">
    <property type="entry name" value="Nitrogenase molybdenum iron protein domain"/>
    <property type="match status" value="2"/>
</dbReference>
<dbReference type="InterPro" id="IPR006129">
    <property type="entry name" value="AdhesinB"/>
</dbReference>
<dbReference type="InterPro" id="IPR050492">
    <property type="entry name" value="Bact_metal-bind_prot9"/>
</dbReference>
<dbReference type="InterPro" id="IPR006128">
    <property type="entry name" value="Lipoprotein_PsaA-like"/>
</dbReference>
<dbReference type="InterPro" id="IPR006127">
    <property type="entry name" value="ZnuA-like"/>
</dbReference>
<dbReference type="NCBIfam" id="NF040928">
    <property type="entry name" value="ABC_lipo_SloC"/>
    <property type="match status" value="1"/>
</dbReference>
<dbReference type="PANTHER" id="PTHR42953">
    <property type="entry name" value="HIGH-AFFINITY ZINC UPTAKE SYSTEM PROTEIN ZNUA-RELATED"/>
    <property type="match status" value="1"/>
</dbReference>
<dbReference type="PANTHER" id="PTHR42953:SF1">
    <property type="entry name" value="METAL-BINDING PROTEIN HI_0362-RELATED"/>
    <property type="match status" value="1"/>
</dbReference>
<dbReference type="Pfam" id="PF01297">
    <property type="entry name" value="ZnuA"/>
    <property type="match status" value="1"/>
</dbReference>
<dbReference type="PRINTS" id="PR00691">
    <property type="entry name" value="ADHESINB"/>
</dbReference>
<dbReference type="PRINTS" id="PR00690">
    <property type="entry name" value="ADHESNFAMILY"/>
</dbReference>
<dbReference type="SUPFAM" id="SSF53807">
    <property type="entry name" value="Helical backbone' metal receptor"/>
    <property type="match status" value="1"/>
</dbReference>
<dbReference type="PROSITE" id="PS51257">
    <property type="entry name" value="PROKAR_LIPOPROTEIN"/>
    <property type="match status" value="1"/>
</dbReference>
<protein>
    <recommendedName>
        <fullName evidence="5">Metal ABC transporter substrate-binding lipoprotein SsaB</fullName>
    </recommendedName>
    <alternativeName>
        <fullName>Adhesin B</fullName>
    </alternativeName>
    <alternativeName>
        <fullName evidence="4">Saliva-binding protein SsaB</fullName>
    </alternativeName>
</protein>
<evidence type="ECO:0000250" key="1">
    <source>
        <dbReference type="UniProtKB" id="P0A4G2"/>
    </source>
</evidence>
<evidence type="ECO:0000255" key="2">
    <source>
        <dbReference type="PROSITE-ProRule" id="PRU00303"/>
    </source>
</evidence>
<evidence type="ECO:0000269" key="3">
    <source>
    </source>
</evidence>
<evidence type="ECO:0000303" key="4">
    <source>
    </source>
</evidence>
<evidence type="ECO:0000305" key="5"/>
<evidence type="ECO:0000305" key="6">
    <source>
    </source>
</evidence>
<comment type="function">
    <text evidence="1 6">Part of an ATP-binding cassette (ABC) transport system involved in metal import (By similarity). Binds a metal with high affinity and specificity and delivers it to the membrane permease for translocation into the cytoplasm (By similarity). Also acts as an adhesin which is involved on adherence to extracellular matrix (By similarity). It is an important factor in the pathogenesis and infection (By similarity). May contribute to the formation and accumulation of dental plaque (Probable).</text>
</comment>
<comment type="subunit">
    <text>Homodimer and homotrimer.</text>
</comment>
<comment type="subcellular location">
    <subcellularLocation>
        <location evidence="2 3">Cell membrane</location>
        <topology evidence="2 3">Lipid-anchor</topology>
    </subcellularLocation>
</comment>
<comment type="similarity">
    <text evidence="5">Belongs to the bacterial solute-binding protein 9 family. Lipoprotein receptor antigen (Lrai) subfamily.</text>
</comment>
<sequence length="309" mass="34684">MKKLGFLSLLLLAVCTLFACSNQKNASSDSSKLKVVATNSIIADITKNIAGDKIDLHSIVPVGKDPHEYEPLPEDVKKTSQADLIFYNGINLETGGNAWFTKLVKNANKEENKDYYAVSDGVDVIYLEGQSEKGKEDPHAWLNLENGIIYAQNIAKRLIEKDPDNKATYEKNLKAYVEKLTALDKEAKEKFNNIPEEKKMIVTSEGCFKYFSKAYNVPSAYIWEINTEEEGTPDQIKSLVEKLRKTKVPSLFVESSVDDRPMKTVSKDTNIPIHAKIFTDSIADQGEEGDTYYSMMKYNLDKISEGLAK</sequence>
<name>MTSA_STRSA</name>
<organism>
    <name type="scientific">Streptococcus sanguinis</name>
    <dbReference type="NCBI Taxonomy" id="1305"/>
    <lineage>
        <taxon>Bacteria</taxon>
        <taxon>Bacillati</taxon>
        <taxon>Bacillota</taxon>
        <taxon>Bacilli</taxon>
        <taxon>Lactobacillales</taxon>
        <taxon>Streptococcaceae</taxon>
        <taxon>Streptococcus</taxon>
    </lineage>
</organism>
<gene>
    <name type="primary">ssaB</name>
</gene>